<organism>
    <name type="scientific">Antirrhinum majus</name>
    <name type="common">Garden snapdragon</name>
    <dbReference type="NCBI Taxonomy" id="4151"/>
    <lineage>
        <taxon>Eukaryota</taxon>
        <taxon>Viridiplantae</taxon>
        <taxon>Streptophyta</taxon>
        <taxon>Embryophyta</taxon>
        <taxon>Tracheophyta</taxon>
        <taxon>Spermatophyta</taxon>
        <taxon>Magnoliopsida</taxon>
        <taxon>eudicotyledons</taxon>
        <taxon>Gunneridae</taxon>
        <taxon>Pentapetalae</taxon>
        <taxon>asterids</taxon>
        <taxon>lamiids</taxon>
        <taxon>Lamiales</taxon>
        <taxon>Plantaginaceae</taxon>
        <taxon>Antirrhineae</taxon>
        <taxon>Antirrhinum</taxon>
    </lineage>
</organism>
<protein>
    <recommendedName>
        <fullName>Probable aquaporin TIP-type</fullName>
    </recommendedName>
    <alternativeName>
        <fullName>Dark intrinsic protein</fullName>
    </alternativeName>
    <alternativeName>
        <fullName>Tonoplast intrinsic protein DiP</fullName>
    </alternativeName>
</protein>
<gene>
    <name type="primary">DIP</name>
</gene>
<proteinExistence type="evidence at transcript level"/>
<feature type="chain" id="PRO_0000064018" description="Probable aquaporin TIP-type">
    <location>
        <begin position="1"/>
        <end position="250"/>
    </location>
</feature>
<feature type="transmembrane region" description="Helical; Name=1" evidence="2">
    <location>
        <begin position="20"/>
        <end position="42"/>
    </location>
</feature>
<feature type="transmembrane region" description="Helical; Name=2" evidence="2">
    <location>
        <begin position="55"/>
        <end position="77"/>
    </location>
</feature>
<feature type="transmembrane region" description="Helical; Name=3" evidence="2">
    <location>
        <begin position="97"/>
        <end position="119"/>
    </location>
</feature>
<feature type="transmembrane region" description="Helical; Name=4" evidence="2">
    <location>
        <begin position="140"/>
        <end position="162"/>
    </location>
</feature>
<feature type="transmembrane region" description="Helical; Name=5" evidence="2">
    <location>
        <begin position="172"/>
        <end position="194"/>
    </location>
</feature>
<feature type="transmembrane region" description="Helical; Name=6" evidence="2">
    <location>
        <begin position="215"/>
        <end position="237"/>
    </location>
</feature>
<feature type="short sequence motif" description="NPA 1">
    <location>
        <begin position="83"/>
        <end position="85"/>
    </location>
</feature>
<feature type="short sequence motif" description="NPA 2">
    <location>
        <begin position="197"/>
        <end position="199"/>
    </location>
</feature>
<accession>P33560</accession>
<evidence type="ECO:0000250" key="1"/>
<evidence type="ECO:0000255" key="2"/>
<evidence type="ECO:0000305" key="3"/>
<name>TIP_ANTMA</name>
<comment type="function">
    <text evidence="1">Channel protein in tonoplast. These proteins may allow the diffusion of amino acids and/or peptides from the vacuolar compartment to the cytoplasm (By similarity).</text>
</comment>
<comment type="subcellular location">
    <subcellularLocation>
        <location evidence="3">Vacuole membrane</location>
        <topology evidence="3">Multi-pass membrane protein</topology>
    </subcellularLocation>
    <text>Tonoplast.</text>
</comment>
<comment type="tissue specificity">
    <text>Expressed in mature seeds and dark-grown seedlings.</text>
</comment>
<comment type="domain">
    <text>Aquaporins contain two tandem repeats each containing three membrane-spanning domains and a pore-forming loop with the signature motif Asn-Pro-Ala (NPA).</text>
</comment>
<comment type="similarity">
    <text evidence="3">Belongs to the MIP/aquaporin (TC 1.A.8) family. TIP (TC 1.A.8.10) subfamily.</text>
</comment>
<dbReference type="EMBL" id="X70417">
    <property type="protein sequence ID" value="CAA49854.1"/>
    <property type="molecule type" value="mRNA"/>
</dbReference>
<dbReference type="PIR" id="S48116">
    <property type="entry name" value="S48116"/>
</dbReference>
<dbReference type="PIR" id="S51781">
    <property type="entry name" value="S51781"/>
</dbReference>
<dbReference type="SMR" id="P33560"/>
<dbReference type="GO" id="GO:0009705">
    <property type="term" value="C:plant-type vacuole membrane"/>
    <property type="evidence" value="ECO:0007669"/>
    <property type="project" value="TreeGrafter"/>
</dbReference>
<dbReference type="GO" id="GO:0015250">
    <property type="term" value="F:water channel activity"/>
    <property type="evidence" value="ECO:0007669"/>
    <property type="project" value="TreeGrafter"/>
</dbReference>
<dbReference type="CDD" id="cd00333">
    <property type="entry name" value="MIP"/>
    <property type="match status" value="1"/>
</dbReference>
<dbReference type="FunFam" id="1.20.1080.10:FF:000002">
    <property type="entry name" value="Probable aquaporin TIP1-1"/>
    <property type="match status" value="1"/>
</dbReference>
<dbReference type="Gene3D" id="1.20.1080.10">
    <property type="entry name" value="Glycerol uptake facilitator protein"/>
    <property type="match status" value="1"/>
</dbReference>
<dbReference type="InterPro" id="IPR023271">
    <property type="entry name" value="Aquaporin-like"/>
</dbReference>
<dbReference type="InterPro" id="IPR034294">
    <property type="entry name" value="Aquaporin_transptr"/>
</dbReference>
<dbReference type="InterPro" id="IPR000425">
    <property type="entry name" value="MIP"/>
</dbReference>
<dbReference type="InterPro" id="IPR022357">
    <property type="entry name" value="MIP_CS"/>
</dbReference>
<dbReference type="NCBIfam" id="TIGR00861">
    <property type="entry name" value="MIP"/>
    <property type="match status" value="1"/>
</dbReference>
<dbReference type="PANTHER" id="PTHR45665:SF37">
    <property type="entry name" value="AQUAPORIN TIP2-3-RELATED"/>
    <property type="match status" value="1"/>
</dbReference>
<dbReference type="PANTHER" id="PTHR45665">
    <property type="entry name" value="AQUAPORIN-8"/>
    <property type="match status" value="1"/>
</dbReference>
<dbReference type="Pfam" id="PF00230">
    <property type="entry name" value="MIP"/>
    <property type="match status" value="1"/>
</dbReference>
<dbReference type="PRINTS" id="PR00783">
    <property type="entry name" value="MINTRINSICP"/>
</dbReference>
<dbReference type="SUPFAM" id="SSF81338">
    <property type="entry name" value="Aquaporin-like"/>
    <property type="match status" value="1"/>
</dbReference>
<dbReference type="PROSITE" id="PS00221">
    <property type="entry name" value="MIP"/>
    <property type="match status" value="1"/>
</dbReference>
<reference key="1">
    <citation type="journal article" date="1993" name="Plant J.">
        <title>DIP: a member of the MIP family of membrane proteins that is expressed in mature seeds and dark-grown seedlings of Antirrhinum majus.</title>
        <authorList>
            <person name="Culianez-Macia F.A."/>
            <person name="Martin C.R."/>
        </authorList>
    </citation>
    <scope>NUCLEOTIDE SEQUENCE [MRNA]</scope>
    <source>
        <strain>cv. JI:522</strain>
        <tissue>Seedling</tissue>
    </source>
</reference>
<sequence length="250" mass="25210">MVKIAFGSIGDSFSVASIKAYVAEFIATLLFVFAGVGSAIAYNKLTSDAALDPAGLVAVAVAHAFALFVGVSMAANVSGGHLNPAVTLGLAVGGNITILTGLFYWIAQCLGSTVACLLLKFVTNGLSVPTHGVAAGMDAIQGVVMEIIITFALVYTVYATAADPKKGSLGVIAPIAIGFIVGANILAAGPFSGGSMNPARSFGPAVASGDFSQNWIYWAGPLIGGALAGFIYGDVFITAHAPLPTSEDYA</sequence>
<keyword id="KW-0472">Membrane</keyword>
<keyword id="KW-0677">Repeat</keyword>
<keyword id="KW-0812">Transmembrane</keyword>
<keyword id="KW-1133">Transmembrane helix</keyword>
<keyword id="KW-0813">Transport</keyword>
<keyword id="KW-0926">Vacuole</keyword>